<evidence type="ECO:0000255" key="1">
    <source>
        <dbReference type="PROSITE-ProRule" id="PRU00080"/>
    </source>
</evidence>
<protein>
    <recommendedName>
        <fullName>F-box/kelch-repeat protein At3g13680</fullName>
    </recommendedName>
</protein>
<dbReference type="EMBL" id="AP001307">
    <property type="protein sequence ID" value="BAB01916.1"/>
    <property type="molecule type" value="Genomic_DNA"/>
</dbReference>
<dbReference type="EMBL" id="CP002686">
    <property type="protein sequence ID" value="AEE75396.1"/>
    <property type="molecule type" value="Genomic_DNA"/>
</dbReference>
<dbReference type="RefSeq" id="NP_187980.1">
    <property type="nucleotide sequence ID" value="NM_112217.3"/>
</dbReference>
<dbReference type="SMR" id="Q9LID1"/>
<dbReference type="BioGRID" id="5910">
    <property type="interactions" value="4"/>
</dbReference>
<dbReference type="FunCoup" id="Q9LID1">
    <property type="interactions" value="1"/>
</dbReference>
<dbReference type="IntAct" id="Q9LID1">
    <property type="interactions" value="4"/>
</dbReference>
<dbReference type="STRING" id="3702.Q9LID1"/>
<dbReference type="PaxDb" id="3702-AT3G13680.1"/>
<dbReference type="ProteomicsDB" id="230929"/>
<dbReference type="EnsemblPlants" id="AT3G13680.1">
    <property type="protein sequence ID" value="AT3G13680.1"/>
    <property type="gene ID" value="AT3G13680"/>
</dbReference>
<dbReference type="GeneID" id="820576"/>
<dbReference type="Gramene" id="AT3G13680.1">
    <property type="protein sequence ID" value="AT3G13680.1"/>
    <property type="gene ID" value="AT3G13680"/>
</dbReference>
<dbReference type="KEGG" id="ath:AT3G13680"/>
<dbReference type="Araport" id="AT3G13680"/>
<dbReference type="TAIR" id="AT3G13680"/>
<dbReference type="HOGENOM" id="CLU_034692_0_0_1"/>
<dbReference type="InParanoid" id="Q9LID1"/>
<dbReference type="OMA" id="WSKFLIT"/>
<dbReference type="PhylomeDB" id="Q9LID1"/>
<dbReference type="PRO" id="PR:Q9LID1"/>
<dbReference type="Proteomes" id="UP000006548">
    <property type="component" value="Chromosome 3"/>
</dbReference>
<dbReference type="ExpressionAtlas" id="Q9LID1">
    <property type="expression patterns" value="baseline and differential"/>
</dbReference>
<dbReference type="CDD" id="cd22157">
    <property type="entry name" value="F-box_AtFBW1-like"/>
    <property type="match status" value="1"/>
</dbReference>
<dbReference type="Gene3D" id="1.20.1280.50">
    <property type="match status" value="1"/>
</dbReference>
<dbReference type="InterPro" id="IPR006527">
    <property type="entry name" value="F-box-assoc_dom_typ1"/>
</dbReference>
<dbReference type="InterPro" id="IPR017451">
    <property type="entry name" value="F-box-assoc_interact_dom"/>
</dbReference>
<dbReference type="InterPro" id="IPR036047">
    <property type="entry name" value="F-box-like_dom_sf"/>
</dbReference>
<dbReference type="InterPro" id="IPR001810">
    <property type="entry name" value="F-box_dom"/>
</dbReference>
<dbReference type="InterPro" id="IPR011043">
    <property type="entry name" value="Gal_Oxase/kelch_b-propeller"/>
</dbReference>
<dbReference type="InterPro" id="IPR050796">
    <property type="entry name" value="SCF_F-box_component"/>
</dbReference>
<dbReference type="NCBIfam" id="TIGR01640">
    <property type="entry name" value="F_box_assoc_1"/>
    <property type="match status" value="1"/>
</dbReference>
<dbReference type="PANTHER" id="PTHR31672">
    <property type="entry name" value="BNACNNG10540D PROTEIN"/>
    <property type="match status" value="1"/>
</dbReference>
<dbReference type="PANTHER" id="PTHR31672:SF13">
    <property type="entry name" value="F-BOX PROTEIN CPR30-LIKE"/>
    <property type="match status" value="1"/>
</dbReference>
<dbReference type="Pfam" id="PF00646">
    <property type="entry name" value="F-box"/>
    <property type="match status" value="1"/>
</dbReference>
<dbReference type="Pfam" id="PF07734">
    <property type="entry name" value="FBA_1"/>
    <property type="match status" value="1"/>
</dbReference>
<dbReference type="SMART" id="SM00256">
    <property type="entry name" value="FBOX"/>
    <property type="match status" value="1"/>
</dbReference>
<dbReference type="SUPFAM" id="SSF81383">
    <property type="entry name" value="F-box domain"/>
    <property type="match status" value="1"/>
</dbReference>
<dbReference type="SUPFAM" id="SSF50965">
    <property type="entry name" value="Galactose oxidase, central domain"/>
    <property type="match status" value="1"/>
</dbReference>
<dbReference type="PROSITE" id="PS50181">
    <property type="entry name" value="FBOX"/>
    <property type="match status" value="1"/>
</dbReference>
<proteinExistence type="evidence at transcript level"/>
<feature type="chain" id="PRO_0000283214" description="F-box/kelch-repeat protein At3g13680">
    <location>
        <begin position="1"/>
        <end position="395"/>
    </location>
</feature>
<feature type="domain" description="F-box" evidence="1">
    <location>
        <begin position="1"/>
        <end position="47"/>
    </location>
</feature>
<feature type="repeat" description="Kelch 1">
    <location>
        <begin position="154"/>
        <end position="202"/>
    </location>
</feature>
<feature type="repeat" description="Kelch 2">
    <location>
        <begin position="210"/>
        <end position="256"/>
    </location>
</feature>
<feature type="repeat" description="Kelch 3">
    <location>
        <begin position="265"/>
        <end position="314"/>
    </location>
</feature>
<feature type="repeat" description="Kelch 4">
    <location>
        <begin position="337"/>
        <end position="383"/>
    </location>
</feature>
<accession>Q9LID1</accession>
<name>FBK54_ARATH</name>
<gene>
    <name type="ordered locus">At3g13680</name>
    <name type="ORF">MMM17.9</name>
</gene>
<reference key="1">
    <citation type="journal article" date="2000" name="DNA Res.">
        <title>Structural analysis of Arabidopsis thaliana chromosome 3. II. Sequence features of the 4,251,695 bp regions covered by 90 P1, TAC and BAC clones.</title>
        <authorList>
            <person name="Kaneko T."/>
            <person name="Katoh T."/>
            <person name="Sato S."/>
            <person name="Nakamura Y."/>
            <person name="Asamizu E."/>
            <person name="Tabata S."/>
        </authorList>
    </citation>
    <scope>NUCLEOTIDE SEQUENCE [LARGE SCALE GENOMIC DNA]</scope>
    <source>
        <strain>cv. Columbia</strain>
    </source>
</reference>
<reference key="2">
    <citation type="journal article" date="2017" name="Plant J.">
        <title>Araport11: a complete reannotation of the Arabidopsis thaliana reference genome.</title>
        <authorList>
            <person name="Cheng C.Y."/>
            <person name="Krishnakumar V."/>
            <person name="Chan A.P."/>
            <person name="Thibaud-Nissen F."/>
            <person name="Schobel S."/>
            <person name="Town C.D."/>
        </authorList>
    </citation>
    <scope>GENOME REANNOTATION</scope>
    <source>
        <strain>cv. Columbia</strain>
    </source>
</reference>
<sequence length="395" mass="45172">MTTMGDLPGDLVEEILSRVPLTSLRAIRSTCQKWNSLSKSQICGRKATAAENKFLGFMMKDSRVCSMKFDLQGIRNDDGELVEPSIKQVSKLDQIEVSQVFHCDGLVLCIIKDNTGLLVWNPYLGQTRWIHPRNNYQIEDRYALGYDNNRNHKILRIFDLYPSSNRVFGYEVYDFSSNSWKVLDVIPEWDIQSHFRGASLKGNAYFPAQKKETVGGIKTINIEDVLLCFDFTRERFGPPLPLPFHSYNADFFVSLACVREEQLAVLYQRWGAFETIEICVTNKIDPNTVSWSKFLITSTGFPVDTFSGSFFIDEEKKVAVVFDLDRYKPTETCRYQIVYIIGQDEYFKSVNMGVAPNIAKNSYQAYCVPLVCSSSYVPSLVQLQINKPGKRKESN</sequence>
<keyword id="KW-0880">Kelch repeat</keyword>
<keyword id="KW-1185">Reference proteome</keyword>
<keyword id="KW-0677">Repeat</keyword>
<organism>
    <name type="scientific">Arabidopsis thaliana</name>
    <name type="common">Mouse-ear cress</name>
    <dbReference type="NCBI Taxonomy" id="3702"/>
    <lineage>
        <taxon>Eukaryota</taxon>
        <taxon>Viridiplantae</taxon>
        <taxon>Streptophyta</taxon>
        <taxon>Embryophyta</taxon>
        <taxon>Tracheophyta</taxon>
        <taxon>Spermatophyta</taxon>
        <taxon>Magnoliopsida</taxon>
        <taxon>eudicotyledons</taxon>
        <taxon>Gunneridae</taxon>
        <taxon>Pentapetalae</taxon>
        <taxon>rosids</taxon>
        <taxon>malvids</taxon>
        <taxon>Brassicales</taxon>
        <taxon>Brassicaceae</taxon>
        <taxon>Camelineae</taxon>
        <taxon>Arabidopsis</taxon>
    </lineage>
</organism>